<reference key="1">
    <citation type="journal article" date="2003" name="Nature">
        <title>Genome sequence of Bacillus cereus and comparative analysis with Bacillus anthracis.</title>
        <authorList>
            <person name="Ivanova N."/>
            <person name="Sorokin A."/>
            <person name="Anderson I."/>
            <person name="Galleron N."/>
            <person name="Candelon B."/>
            <person name="Kapatral V."/>
            <person name="Bhattacharyya A."/>
            <person name="Reznik G."/>
            <person name="Mikhailova N."/>
            <person name="Lapidus A."/>
            <person name="Chu L."/>
            <person name="Mazur M."/>
            <person name="Goltsman E."/>
            <person name="Larsen N."/>
            <person name="D'Souza M."/>
            <person name="Walunas T."/>
            <person name="Grechkin Y."/>
            <person name="Pusch G."/>
            <person name="Haselkorn R."/>
            <person name="Fonstein M."/>
            <person name="Ehrlich S.D."/>
            <person name="Overbeek R."/>
            <person name="Kyrpides N.C."/>
        </authorList>
    </citation>
    <scope>NUCLEOTIDE SEQUENCE [LARGE SCALE GENOMIC DNA]</scope>
    <source>
        <strain>ATCC 14579 / DSM 31 / CCUG 7414 / JCM 2152 / NBRC 15305 / NCIMB 9373 / NCTC 2599 / NRRL B-3711</strain>
    </source>
</reference>
<accession>Q818X2</accession>
<dbReference type="EC" id="2.1.1.197" evidence="1"/>
<dbReference type="EMBL" id="AE016877">
    <property type="protein sequence ID" value="AAP11034.1"/>
    <property type="molecule type" value="Genomic_DNA"/>
</dbReference>
<dbReference type="RefSeq" id="NP_833833.1">
    <property type="nucleotide sequence ID" value="NC_004722.1"/>
</dbReference>
<dbReference type="RefSeq" id="WP_000608914.1">
    <property type="nucleotide sequence ID" value="NZ_CP138336.1"/>
</dbReference>
<dbReference type="SMR" id="Q818X2"/>
<dbReference type="STRING" id="226900.BC_4115"/>
<dbReference type="KEGG" id="bce:BC4115"/>
<dbReference type="PATRIC" id="fig|226900.8.peg.4251"/>
<dbReference type="HOGENOM" id="CLU_046586_2_3_9"/>
<dbReference type="OrthoDB" id="9760689at2"/>
<dbReference type="UniPathway" id="UPA00078"/>
<dbReference type="Proteomes" id="UP000001417">
    <property type="component" value="Chromosome"/>
</dbReference>
<dbReference type="GO" id="GO:0010340">
    <property type="term" value="F:carboxyl-O-methyltransferase activity"/>
    <property type="evidence" value="ECO:0007669"/>
    <property type="project" value="UniProtKB-UniRule"/>
</dbReference>
<dbReference type="GO" id="GO:0102130">
    <property type="term" value="F:malonyl-CoA methyltransferase activity"/>
    <property type="evidence" value="ECO:0007669"/>
    <property type="project" value="UniProtKB-EC"/>
</dbReference>
<dbReference type="GO" id="GO:0008168">
    <property type="term" value="F:methyltransferase activity"/>
    <property type="evidence" value="ECO:0000318"/>
    <property type="project" value="GO_Central"/>
</dbReference>
<dbReference type="GO" id="GO:0009102">
    <property type="term" value="P:biotin biosynthetic process"/>
    <property type="evidence" value="ECO:0007669"/>
    <property type="project" value="UniProtKB-UniRule"/>
</dbReference>
<dbReference type="GO" id="GO:0032259">
    <property type="term" value="P:methylation"/>
    <property type="evidence" value="ECO:0007669"/>
    <property type="project" value="UniProtKB-KW"/>
</dbReference>
<dbReference type="CDD" id="cd02440">
    <property type="entry name" value="AdoMet_MTases"/>
    <property type="match status" value="1"/>
</dbReference>
<dbReference type="Gene3D" id="3.40.50.150">
    <property type="entry name" value="Vaccinia Virus protein VP39"/>
    <property type="match status" value="1"/>
</dbReference>
<dbReference type="HAMAP" id="MF_00835">
    <property type="entry name" value="BioC"/>
    <property type="match status" value="1"/>
</dbReference>
<dbReference type="InterPro" id="IPR011814">
    <property type="entry name" value="BioC"/>
</dbReference>
<dbReference type="InterPro" id="IPR025714">
    <property type="entry name" value="Methyltranfer_dom"/>
</dbReference>
<dbReference type="InterPro" id="IPR029063">
    <property type="entry name" value="SAM-dependent_MTases_sf"/>
</dbReference>
<dbReference type="NCBIfam" id="TIGR02072">
    <property type="entry name" value="BioC"/>
    <property type="match status" value="1"/>
</dbReference>
<dbReference type="PANTHER" id="PTHR43861:SF1">
    <property type="entry name" value="TRANS-ACONITATE 2-METHYLTRANSFERASE"/>
    <property type="match status" value="1"/>
</dbReference>
<dbReference type="PANTHER" id="PTHR43861">
    <property type="entry name" value="TRANS-ACONITATE 2-METHYLTRANSFERASE-RELATED"/>
    <property type="match status" value="1"/>
</dbReference>
<dbReference type="Pfam" id="PF13847">
    <property type="entry name" value="Methyltransf_31"/>
    <property type="match status" value="1"/>
</dbReference>
<dbReference type="SUPFAM" id="SSF53335">
    <property type="entry name" value="S-adenosyl-L-methionine-dependent methyltransferases"/>
    <property type="match status" value="1"/>
</dbReference>
<sequence length="269" mass="31019">MINKTLLQKRFNGAAVSYDRYANVQKKMAHSLLSILKERYSETASIRILELGCGTGYVTEQLSKLFPKSHITAVDFAESMIAIAQTRQNVKNVTFHCEDIERLRLEESYDVIISNATFQWLNNLQQVLRNLFQHLSIDGILLFSTFGHETFQELHASFQRAKEERNIKNETSIGQRFYSKDQLLHICKIETGDVHVSETCYIESFTEVKEFLHSIRKVGATNSNEGSYCQSPSLFRAMLRIYERDFTGNEGIMATYHALFIHITKEGKR</sequence>
<gene>
    <name evidence="1" type="primary">bioC</name>
    <name type="ordered locus">BC_4115</name>
</gene>
<feature type="chain" id="PRO_0000412478" description="Malonyl-[acyl-carrier protein] O-methyltransferase">
    <location>
        <begin position="1"/>
        <end position="269"/>
    </location>
</feature>
<name>BIOC_BACCR</name>
<comment type="function">
    <text evidence="1">Converts the free carboxyl group of a malonyl-thioester to its methyl ester by transfer of a methyl group from S-adenosyl-L-methionine (SAM). It allows to synthesize pimeloyl-ACP via the fatty acid synthetic pathway.</text>
</comment>
<comment type="catalytic activity">
    <reaction evidence="1">
        <text>malonyl-[ACP] + S-adenosyl-L-methionine = malonyl-[ACP] methyl ester + S-adenosyl-L-homocysteine</text>
        <dbReference type="Rhea" id="RHEA:17105"/>
        <dbReference type="Rhea" id="RHEA-COMP:9623"/>
        <dbReference type="Rhea" id="RHEA-COMP:9954"/>
        <dbReference type="ChEBI" id="CHEBI:57856"/>
        <dbReference type="ChEBI" id="CHEBI:59789"/>
        <dbReference type="ChEBI" id="CHEBI:78449"/>
        <dbReference type="ChEBI" id="CHEBI:78845"/>
        <dbReference type="EC" id="2.1.1.197"/>
    </reaction>
</comment>
<comment type="pathway">
    <text evidence="1">Cofactor biosynthesis; biotin biosynthesis.</text>
</comment>
<comment type="similarity">
    <text evidence="1">Belongs to the methyltransferase superfamily.</text>
</comment>
<protein>
    <recommendedName>
        <fullName evidence="1">Malonyl-[acyl-carrier protein] O-methyltransferase</fullName>
        <shortName evidence="1">Malonyl-ACP O-methyltransferase</shortName>
        <ecNumber evidence="1">2.1.1.197</ecNumber>
    </recommendedName>
    <alternativeName>
        <fullName evidence="1">Biotin synthesis protein BioC</fullName>
    </alternativeName>
</protein>
<proteinExistence type="inferred from homology"/>
<organism>
    <name type="scientific">Bacillus cereus (strain ATCC 14579 / DSM 31 / CCUG 7414 / JCM 2152 / NBRC 15305 / NCIMB 9373 / NCTC 2599 / NRRL B-3711)</name>
    <dbReference type="NCBI Taxonomy" id="226900"/>
    <lineage>
        <taxon>Bacteria</taxon>
        <taxon>Bacillati</taxon>
        <taxon>Bacillota</taxon>
        <taxon>Bacilli</taxon>
        <taxon>Bacillales</taxon>
        <taxon>Bacillaceae</taxon>
        <taxon>Bacillus</taxon>
        <taxon>Bacillus cereus group</taxon>
    </lineage>
</organism>
<keyword id="KW-0093">Biotin biosynthesis</keyword>
<keyword id="KW-0489">Methyltransferase</keyword>
<keyword id="KW-1185">Reference proteome</keyword>
<keyword id="KW-0949">S-adenosyl-L-methionine</keyword>
<keyword id="KW-0808">Transferase</keyword>
<evidence type="ECO:0000255" key="1">
    <source>
        <dbReference type="HAMAP-Rule" id="MF_00835"/>
    </source>
</evidence>